<protein>
    <recommendedName>
        <fullName evidence="1">Imidazole glycerol phosphate synthase subunit HisH</fullName>
        <ecNumber evidence="1">4.3.2.10</ecNumber>
    </recommendedName>
    <alternativeName>
        <fullName evidence="1">IGP synthase glutaminase subunit</fullName>
        <ecNumber evidence="1">3.5.1.2</ecNumber>
    </alternativeName>
    <alternativeName>
        <fullName evidence="1">IGP synthase subunit HisH</fullName>
    </alternativeName>
    <alternativeName>
        <fullName evidence="1">ImGP synthase subunit HisH</fullName>
        <shortName evidence="1">IGPS subunit HisH</shortName>
    </alternativeName>
</protein>
<proteinExistence type="inferred from homology"/>
<gene>
    <name evidence="1" type="primary">hisH</name>
    <name type="ordered locus">RB9372</name>
</gene>
<sequence length="205" mass="22047">MITIVDYQMGNLRSVQKAVERSGVEAEITSDASQIAAAERLILPGVGAFGDAIGEIRRRDLEKPIKDFIASGKPFLGICLGLQMLFEQGFEGGTHEGLGVLGGDVVAFELPAEFKVPHMGWNAVDVKDAGADLGIQSGTHFYFVHSYFVRPADPSVVALTCDYGGEFCAAVRRGNLMATQFHPEKSQGDGLRLMQRFATAPVEVA</sequence>
<reference key="1">
    <citation type="journal article" date="2003" name="Proc. Natl. Acad. Sci. U.S.A.">
        <title>Complete genome sequence of the marine planctomycete Pirellula sp. strain 1.</title>
        <authorList>
            <person name="Gloeckner F.O."/>
            <person name="Kube M."/>
            <person name="Bauer M."/>
            <person name="Teeling H."/>
            <person name="Lombardot T."/>
            <person name="Ludwig W."/>
            <person name="Gade D."/>
            <person name="Beck A."/>
            <person name="Borzym K."/>
            <person name="Heitmann K."/>
            <person name="Rabus R."/>
            <person name="Schlesner H."/>
            <person name="Amann R."/>
            <person name="Reinhardt R."/>
        </authorList>
    </citation>
    <scope>NUCLEOTIDE SEQUENCE [LARGE SCALE GENOMIC DNA]</scope>
    <source>
        <strain>DSM 10527 / NCIMB 13988 / SH1</strain>
    </source>
</reference>
<accession>Q7ULP3</accession>
<dbReference type="EC" id="4.3.2.10" evidence="1"/>
<dbReference type="EC" id="3.5.1.2" evidence="1"/>
<dbReference type="EMBL" id="BX294149">
    <property type="protein sequence ID" value="CAD76226.1"/>
    <property type="molecule type" value="Genomic_DNA"/>
</dbReference>
<dbReference type="RefSeq" id="NP_868849.1">
    <property type="nucleotide sequence ID" value="NC_005027.1"/>
</dbReference>
<dbReference type="RefSeq" id="WP_007333911.1">
    <property type="nucleotide sequence ID" value="NC_005027.1"/>
</dbReference>
<dbReference type="SMR" id="Q7ULP3"/>
<dbReference type="FunCoup" id="Q7ULP3">
    <property type="interactions" value="276"/>
</dbReference>
<dbReference type="STRING" id="243090.RB9372"/>
<dbReference type="EnsemblBacteria" id="CAD76226">
    <property type="protein sequence ID" value="CAD76226"/>
    <property type="gene ID" value="RB9372"/>
</dbReference>
<dbReference type="KEGG" id="rba:RB9372"/>
<dbReference type="PATRIC" id="fig|243090.15.peg.4491"/>
<dbReference type="eggNOG" id="COG0118">
    <property type="taxonomic scope" value="Bacteria"/>
</dbReference>
<dbReference type="HOGENOM" id="CLU_071837_2_2_0"/>
<dbReference type="InParanoid" id="Q7ULP3"/>
<dbReference type="OrthoDB" id="9807137at2"/>
<dbReference type="UniPathway" id="UPA00031">
    <property type="reaction ID" value="UER00010"/>
</dbReference>
<dbReference type="Proteomes" id="UP000001025">
    <property type="component" value="Chromosome"/>
</dbReference>
<dbReference type="GO" id="GO:0005737">
    <property type="term" value="C:cytoplasm"/>
    <property type="evidence" value="ECO:0007669"/>
    <property type="project" value="UniProtKB-SubCell"/>
</dbReference>
<dbReference type="GO" id="GO:0004359">
    <property type="term" value="F:glutaminase activity"/>
    <property type="evidence" value="ECO:0007669"/>
    <property type="project" value="UniProtKB-EC"/>
</dbReference>
<dbReference type="GO" id="GO:0000107">
    <property type="term" value="F:imidazoleglycerol-phosphate synthase activity"/>
    <property type="evidence" value="ECO:0000318"/>
    <property type="project" value="GO_Central"/>
</dbReference>
<dbReference type="GO" id="GO:0016829">
    <property type="term" value="F:lyase activity"/>
    <property type="evidence" value="ECO:0007669"/>
    <property type="project" value="UniProtKB-KW"/>
</dbReference>
<dbReference type="GO" id="GO:0000105">
    <property type="term" value="P:L-histidine biosynthetic process"/>
    <property type="evidence" value="ECO:0007669"/>
    <property type="project" value="UniProtKB-UniRule"/>
</dbReference>
<dbReference type="CDD" id="cd01748">
    <property type="entry name" value="GATase1_IGP_Synthase"/>
    <property type="match status" value="1"/>
</dbReference>
<dbReference type="FunFam" id="3.40.50.880:FF:000148">
    <property type="entry name" value="Imidazole glycerol phosphate synthase subunit HisH"/>
    <property type="match status" value="1"/>
</dbReference>
<dbReference type="Gene3D" id="3.40.50.880">
    <property type="match status" value="1"/>
</dbReference>
<dbReference type="HAMAP" id="MF_00278">
    <property type="entry name" value="HisH"/>
    <property type="match status" value="1"/>
</dbReference>
<dbReference type="InterPro" id="IPR029062">
    <property type="entry name" value="Class_I_gatase-like"/>
</dbReference>
<dbReference type="InterPro" id="IPR017926">
    <property type="entry name" value="GATASE"/>
</dbReference>
<dbReference type="InterPro" id="IPR010139">
    <property type="entry name" value="Imidazole-glycPsynth_HisH"/>
</dbReference>
<dbReference type="NCBIfam" id="TIGR01855">
    <property type="entry name" value="IMP_synth_hisH"/>
    <property type="match status" value="1"/>
</dbReference>
<dbReference type="PANTHER" id="PTHR42701">
    <property type="entry name" value="IMIDAZOLE GLYCEROL PHOSPHATE SYNTHASE SUBUNIT HISH"/>
    <property type="match status" value="1"/>
</dbReference>
<dbReference type="PANTHER" id="PTHR42701:SF1">
    <property type="entry name" value="IMIDAZOLE GLYCEROL PHOSPHATE SYNTHASE SUBUNIT HISH"/>
    <property type="match status" value="1"/>
</dbReference>
<dbReference type="Pfam" id="PF00117">
    <property type="entry name" value="GATase"/>
    <property type="match status" value="1"/>
</dbReference>
<dbReference type="PIRSF" id="PIRSF000495">
    <property type="entry name" value="Amidotransf_hisH"/>
    <property type="match status" value="1"/>
</dbReference>
<dbReference type="SUPFAM" id="SSF52317">
    <property type="entry name" value="Class I glutamine amidotransferase-like"/>
    <property type="match status" value="1"/>
</dbReference>
<dbReference type="PROSITE" id="PS51273">
    <property type="entry name" value="GATASE_TYPE_1"/>
    <property type="match status" value="1"/>
</dbReference>
<keyword id="KW-0028">Amino-acid biosynthesis</keyword>
<keyword id="KW-0963">Cytoplasm</keyword>
<keyword id="KW-0315">Glutamine amidotransferase</keyword>
<keyword id="KW-0368">Histidine biosynthesis</keyword>
<keyword id="KW-0378">Hydrolase</keyword>
<keyword id="KW-0456">Lyase</keyword>
<keyword id="KW-1185">Reference proteome</keyword>
<organism>
    <name type="scientific">Rhodopirellula baltica (strain DSM 10527 / NCIMB 13988 / SH1)</name>
    <dbReference type="NCBI Taxonomy" id="243090"/>
    <lineage>
        <taxon>Bacteria</taxon>
        <taxon>Pseudomonadati</taxon>
        <taxon>Planctomycetota</taxon>
        <taxon>Planctomycetia</taxon>
        <taxon>Pirellulales</taxon>
        <taxon>Pirellulaceae</taxon>
        <taxon>Rhodopirellula</taxon>
    </lineage>
</organism>
<name>HIS5_RHOBA</name>
<evidence type="ECO:0000255" key="1">
    <source>
        <dbReference type="HAMAP-Rule" id="MF_00278"/>
    </source>
</evidence>
<feature type="chain" id="PRO_0000152415" description="Imidazole glycerol phosphate synthase subunit HisH">
    <location>
        <begin position="1"/>
        <end position="205"/>
    </location>
</feature>
<feature type="domain" description="Glutamine amidotransferase type-1" evidence="1">
    <location>
        <begin position="1"/>
        <end position="205"/>
    </location>
</feature>
<feature type="active site" description="Nucleophile" evidence="1">
    <location>
        <position position="79"/>
    </location>
</feature>
<feature type="active site" evidence="1">
    <location>
        <position position="182"/>
    </location>
</feature>
<feature type="active site" evidence="1">
    <location>
        <position position="184"/>
    </location>
</feature>
<comment type="function">
    <text evidence="1">IGPS catalyzes the conversion of PRFAR and glutamine to IGP, AICAR and glutamate. The HisH subunit catalyzes the hydrolysis of glutamine to glutamate and ammonia as part of the synthesis of IGP and AICAR. The resulting ammonia molecule is channeled to the active site of HisF.</text>
</comment>
<comment type="catalytic activity">
    <reaction evidence="1">
        <text>5-[(5-phospho-1-deoxy-D-ribulos-1-ylimino)methylamino]-1-(5-phospho-beta-D-ribosyl)imidazole-4-carboxamide + L-glutamine = D-erythro-1-(imidazol-4-yl)glycerol 3-phosphate + 5-amino-1-(5-phospho-beta-D-ribosyl)imidazole-4-carboxamide + L-glutamate + H(+)</text>
        <dbReference type="Rhea" id="RHEA:24793"/>
        <dbReference type="ChEBI" id="CHEBI:15378"/>
        <dbReference type="ChEBI" id="CHEBI:29985"/>
        <dbReference type="ChEBI" id="CHEBI:58278"/>
        <dbReference type="ChEBI" id="CHEBI:58359"/>
        <dbReference type="ChEBI" id="CHEBI:58475"/>
        <dbReference type="ChEBI" id="CHEBI:58525"/>
        <dbReference type="EC" id="4.3.2.10"/>
    </reaction>
</comment>
<comment type="catalytic activity">
    <reaction evidence="1">
        <text>L-glutamine + H2O = L-glutamate + NH4(+)</text>
        <dbReference type="Rhea" id="RHEA:15889"/>
        <dbReference type="ChEBI" id="CHEBI:15377"/>
        <dbReference type="ChEBI" id="CHEBI:28938"/>
        <dbReference type="ChEBI" id="CHEBI:29985"/>
        <dbReference type="ChEBI" id="CHEBI:58359"/>
        <dbReference type="EC" id="3.5.1.2"/>
    </reaction>
</comment>
<comment type="pathway">
    <text evidence="1">Amino-acid biosynthesis; L-histidine biosynthesis; L-histidine from 5-phospho-alpha-D-ribose 1-diphosphate: step 5/9.</text>
</comment>
<comment type="subunit">
    <text evidence="1">Heterodimer of HisH and HisF.</text>
</comment>
<comment type="subcellular location">
    <subcellularLocation>
        <location evidence="1">Cytoplasm</location>
    </subcellularLocation>
</comment>